<dbReference type="EC" id="4.2.1.-" evidence="4"/>
<dbReference type="EMBL" id="KZ559171">
    <property type="protein sequence ID" value="PLB34861.1"/>
    <property type="molecule type" value="Genomic_DNA"/>
</dbReference>
<dbReference type="SMR" id="A0A2I2F2K6"/>
<dbReference type="STRING" id="41067.A0A2I2F2K6"/>
<dbReference type="OrthoDB" id="5281072at2759"/>
<dbReference type="UniPathway" id="UPA00154"/>
<dbReference type="Proteomes" id="UP000234585">
    <property type="component" value="Unassembled WGS sequence"/>
</dbReference>
<dbReference type="GO" id="GO:0016829">
    <property type="term" value="F:lyase activity"/>
    <property type="evidence" value="ECO:0007669"/>
    <property type="project" value="UniProtKB-KW"/>
</dbReference>
<dbReference type="GO" id="GO:0009813">
    <property type="term" value="P:flavonoid biosynthetic process"/>
    <property type="evidence" value="ECO:0007669"/>
    <property type="project" value="UniProtKB-UniPathway"/>
</dbReference>
<dbReference type="Gene3D" id="3.10.450.50">
    <property type="match status" value="1"/>
</dbReference>
<dbReference type="InterPro" id="IPR032710">
    <property type="entry name" value="NTF2-like_dom_sf"/>
</dbReference>
<dbReference type="InterPro" id="IPR049884">
    <property type="entry name" value="Scytalone_dh"/>
</dbReference>
<dbReference type="Pfam" id="PF02982">
    <property type="entry name" value="Scytalone_dh"/>
    <property type="match status" value="1"/>
</dbReference>
<dbReference type="SUPFAM" id="SSF54427">
    <property type="entry name" value="NTF2-like"/>
    <property type="match status" value="1"/>
</dbReference>
<gene>
    <name evidence="3" type="primary">cfoI</name>
    <name type="ORF">BDW47DRAFT_70811</name>
</gene>
<accession>A0A2I2F2K6</accession>
<proteinExistence type="inferred from homology"/>
<evidence type="ECO:0000250" key="1">
    <source>
        <dbReference type="UniProtKB" id="P56221"/>
    </source>
</evidence>
<evidence type="ECO:0000269" key="2">
    <source>
    </source>
</evidence>
<evidence type="ECO:0000303" key="3">
    <source>
    </source>
</evidence>
<evidence type="ECO:0000305" key="4"/>
<comment type="function">
    <text evidence="2">Cytochrome P450 monooxygenase; part of the gene cluster that mediates the biosynthesis of chlorflavonin, a fungal flavonoid with acetolactate synthase inhibitory activity (PubMed:36704842). Within the pathway, cfoI is responsible for the hydroxylation of the flavonoid skeleton at position C3 with cfoF (PubMed:36704842). The pathway begins with the PKS-NRPS hybrid synthetase cfoA that uses benzoic acid or p-hydroxybenzoic acid as a starter unit with four rounds of chain elongation using malonyl-CoA to form the chalcone skeleton. Then, a new type of chalcone isomerase, cfoK, catalyzes the conversion of the chalcone into a flavanone by a histidine-mediated oxa-Michael addition mechanism. The desaturation of flavanone to flavone is catalyzed by a new type of flavone synthase, the flavin mononucleotide (FMN)-dependent oxidoreductase cfoJ. Monooxygenases cfoF, cfoG, and P450 cfoH are responsible for the hydroxylation of the flavonoid skeleton at sites C3, C8, and C2', respectively. Like cfoF, the dehydratase cfoI plays also a role in the hydroxylation of position C3. Methyltransferases cfoB, cfoC, and cfoD then catalyze the methylation of C7-OH, C8-OH, and C3-OH, respectively. Finally, the monooxygenase cfoE is responsible for the chlorination of flavonoid at position C3' (PubMed:36704842).</text>
</comment>
<comment type="pathway">
    <text evidence="2">Secondary metabolite biosynthesis; flavonoid biosynthesis.</text>
</comment>
<comment type="subunit">
    <text evidence="1">Homotrimer (By similarity). Each subunit contains an active site, located in the central part of the hydrophobic core of the monomer, which functions independently (By similarity).</text>
</comment>
<comment type="disruption phenotype">
    <text evidence="2">Impairs the hydroxylation of the flavonoid skeleton at position C3.</text>
</comment>
<comment type="similarity">
    <text evidence="4">Belongs to the scytalone dehydratase family.</text>
</comment>
<sequence>MTFDIYIPENLAFSDYIAVIQVARTWADAQDRKDPERFLATVAPEVTIDYSLLIPAWKSKVYTADEFVATWLAPDRVGLSVLATQHLLGMPYIKSATRDEIVVEFQEVASHGRRQDDDGAFGGKIGETADGRGWVEHRYVKIDGQWKIDLIKPSIIYMAGDWERVRRAEGAE</sequence>
<organism>
    <name type="scientific">Aspergillus candidus</name>
    <dbReference type="NCBI Taxonomy" id="41067"/>
    <lineage>
        <taxon>Eukaryota</taxon>
        <taxon>Fungi</taxon>
        <taxon>Dikarya</taxon>
        <taxon>Ascomycota</taxon>
        <taxon>Pezizomycotina</taxon>
        <taxon>Eurotiomycetes</taxon>
        <taxon>Eurotiomycetidae</taxon>
        <taxon>Eurotiales</taxon>
        <taxon>Aspergillaceae</taxon>
        <taxon>Aspergillus</taxon>
        <taxon>Aspergillus subgen. Circumdati</taxon>
    </lineage>
</organism>
<protein>
    <recommendedName>
        <fullName evidence="4">Dehydratase cfoI</fullName>
        <ecNumber evidence="4">4.2.1.-</ecNumber>
    </recommendedName>
    <alternativeName>
        <fullName evidence="3">Chlorflavonin biosynthesis cluster protein I</fullName>
    </alternativeName>
</protein>
<name>CFOI_ASPCN</name>
<reference key="1">
    <citation type="submission" date="2017-12" db="EMBL/GenBank/DDBJ databases">
        <authorList>
            <consortium name="DOE Joint Genome Institute"/>
            <person name="Haridas S."/>
            <person name="Kjaerbolling I."/>
            <person name="Vesth T.C."/>
            <person name="Frisvad J.C."/>
            <person name="Nybo J.L."/>
            <person name="Theobald S."/>
            <person name="Kuo A."/>
            <person name="Bowyer P."/>
            <person name="Matsuda Y."/>
            <person name="Mondo S."/>
            <person name="Lyhne E.K."/>
            <person name="Kogle M.E."/>
            <person name="Clum A."/>
            <person name="Lipzen A."/>
            <person name="Salamov A."/>
            <person name="Ngan C.Y."/>
            <person name="Daum C."/>
            <person name="Chiniquy J."/>
            <person name="Barry K."/>
            <person name="LaButti K."/>
            <person name="Simmons B.A."/>
            <person name="Magnuson J.K."/>
            <person name="Mortensen U.H."/>
            <person name="Larsen T.O."/>
            <person name="Grigoriev I.V."/>
            <person name="Baker S.E."/>
            <person name="Andersen M.R."/>
            <person name="Nordberg H.P."/>
            <person name="Cantor M.N."/>
            <person name="Hua S.X."/>
        </authorList>
    </citation>
    <scope>NUCLEOTIDE SEQUENCE [LARGE SCALE GENOMIC DNA]</scope>
    <source>
        <strain>CBS 102.13</strain>
    </source>
</reference>
<reference key="2">
    <citation type="journal article" date="2023" name="Angew. Chem. Int. Ed.">
        <title>Discovery of a Unique Flavonoid Biosynthesis Mechanism in Fungi by Genome Mining.</title>
        <authorList>
            <person name="Zhang W."/>
            <person name="Zhang X."/>
            <person name="Feng D."/>
            <person name="Liang Y."/>
            <person name="Wu Z."/>
            <person name="Du S."/>
            <person name="Zhou Y."/>
            <person name="Geng C."/>
            <person name="Men P."/>
            <person name="Fu C."/>
            <person name="Huang X."/>
            <person name="Lu X."/>
        </authorList>
    </citation>
    <scope>FUNCTION</scope>
    <scope>DISRUPTION PHENOTYPE</scope>
    <scope>PATHWAY</scope>
</reference>
<feature type="chain" id="PRO_0000459546" description="Dehydratase cfoI">
    <location>
        <begin position="1"/>
        <end position="172"/>
    </location>
</feature>
<feature type="active site" evidence="1">
    <location>
        <position position="86"/>
    </location>
</feature>
<feature type="active site" evidence="1">
    <location>
        <position position="111"/>
    </location>
</feature>
<keyword id="KW-0284">Flavonoid biosynthesis</keyword>
<keyword id="KW-0456">Lyase</keyword>
<keyword id="KW-1185">Reference proteome</keyword>